<sequence length="208" mass="23353">MKNLLCAVMLTSPLLYSTAVFADDAQQLRNTLVNTASLKTDFKQTVTDVNKKVIQTGSGILALAHPNQFYWHLTSPDESQIVADGKDLWIYNPFAEEVVIMDFAEAINASPIALLVHRDDTTWSQYSVTKKQDCYDIRPKAIDSGIVTVSVCFKNSQLTKFNVLDDKGNISQFDLSNQKVITTEDKALFKFVLPENVDIDDQRLKTLN</sequence>
<protein>
    <recommendedName>
        <fullName evidence="1">Outer-membrane lipoprotein carrier protein</fullName>
    </recommendedName>
</protein>
<comment type="function">
    <text evidence="1">Participates in the translocation of lipoproteins from the inner membrane to the outer membrane. Only forms a complex with a lipoprotein if the residue after the N-terminal Cys is not an aspartate (The Asp acts as a targeting signal to indicate that the lipoprotein should stay in the inner membrane).</text>
</comment>
<comment type="subunit">
    <text evidence="1">Monomer.</text>
</comment>
<comment type="subcellular location">
    <subcellularLocation>
        <location evidence="1">Periplasm</location>
    </subcellularLocation>
</comment>
<comment type="similarity">
    <text evidence="1">Belongs to the LolA family.</text>
</comment>
<feature type="signal peptide" evidence="1">
    <location>
        <begin position="1"/>
        <end position="22"/>
    </location>
</feature>
<feature type="chain" id="PRO_5000241524" description="Outer-membrane lipoprotein carrier protein">
    <location>
        <begin position="23"/>
        <end position="208"/>
    </location>
</feature>
<evidence type="ECO:0000255" key="1">
    <source>
        <dbReference type="HAMAP-Rule" id="MF_00240"/>
    </source>
</evidence>
<gene>
    <name evidence="1" type="primary">lolA</name>
    <name type="ordered locus">Sputcn32_2010</name>
</gene>
<accession>A4Y6Z8</accession>
<name>LOLA_SHEPC</name>
<keyword id="KW-0143">Chaperone</keyword>
<keyword id="KW-0574">Periplasm</keyword>
<keyword id="KW-0653">Protein transport</keyword>
<keyword id="KW-0732">Signal</keyword>
<keyword id="KW-0813">Transport</keyword>
<dbReference type="EMBL" id="CP000681">
    <property type="protein sequence ID" value="ABP75731.1"/>
    <property type="molecule type" value="Genomic_DNA"/>
</dbReference>
<dbReference type="SMR" id="A4Y6Z8"/>
<dbReference type="STRING" id="319224.Sputcn32_2010"/>
<dbReference type="KEGG" id="spc:Sputcn32_2010"/>
<dbReference type="eggNOG" id="COG2834">
    <property type="taxonomic scope" value="Bacteria"/>
</dbReference>
<dbReference type="HOGENOM" id="CLU_087560_1_1_6"/>
<dbReference type="GO" id="GO:0030288">
    <property type="term" value="C:outer membrane-bounded periplasmic space"/>
    <property type="evidence" value="ECO:0007669"/>
    <property type="project" value="TreeGrafter"/>
</dbReference>
<dbReference type="GO" id="GO:0044874">
    <property type="term" value="P:lipoprotein localization to outer membrane"/>
    <property type="evidence" value="ECO:0007669"/>
    <property type="project" value="UniProtKB-UniRule"/>
</dbReference>
<dbReference type="GO" id="GO:0042953">
    <property type="term" value="P:lipoprotein transport"/>
    <property type="evidence" value="ECO:0007669"/>
    <property type="project" value="InterPro"/>
</dbReference>
<dbReference type="CDD" id="cd16325">
    <property type="entry name" value="LolA"/>
    <property type="match status" value="1"/>
</dbReference>
<dbReference type="Gene3D" id="2.50.20.10">
    <property type="entry name" value="Lipoprotein localisation LolA/LolB/LppX"/>
    <property type="match status" value="1"/>
</dbReference>
<dbReference type="HAMAP" id="MF_00240">
    <property type="entry name" value="LolA"/>
    <property type="match status" value="1"/>
</dbReference>
<dbReference type="InterPro" id="IPR029046">
    <property type="entry name" value="LolA/LolB/LppX"/>
</dbReference>
<dbReference type="InterPro" id="IPR004564">
    <property type="entry name" value="OM_lipoprot_carrier_LolA-like"/>
</dbReference>
<dbReference type="InterPro" id="IPR018323">
    <property type="entry name" value="OM_lipoprot_carrier_LolA_Pbac"/>
</dbReference>
<dbReference type="NCBIfam" id="TIGR00547">
    <property type="entry name" value="lolA"/>
    <property type="match status" value="1"/>
</dbReference>
<dbReference type="PANTHER" id="PTHR35869">
    <property type="entry name" value="OUTER-MEMBRANE LIPOPROTEIN CARRIER PROTEIN"/>
    <property type="match status" value="1"/>
</dbReference>
<dbReference type="PANTHER" id="PTHR35869:SF1">
    <property type="entry name" value="OUTER-MEMBRANE LIPOPROTEIN CARRIER PROTEIN"/>
    <property type="match status" value="1"/>
</dbReference>
<dbReference type="Pfam" id="PF03548">
    <property type="entry name" value="LolA"/>
    <property type="match status" value="1"/>
</dbReference>
<dbReference type="SUPFAM" id="SSF89392">
    <property type="entry name" value="Prokaryotic lipoproteins and lipoprotein localization factors"/>
    <property type="match status" value="1"/>
</dbReference>
<organism>
    <name type="scientific">Shewanella putrefaciens (strain CN-32 / ATCC BAA-453)</name>
    <dbReference type="NCBI Taxonomy" id="319224"/>
    <lineage>
        <taxon>Bacteria</taxon>
        <taxon>Pseudomonadati</taxon>
        <taxon>Pseudomonadota</taxon>
        <taxon>Gammaproteobacteria</taxon>
        <taxon>Alteromonadales</taxon>
        <taxon>Shewanellaceae</taxon>
        <taxon>Shewanella</taxon>
    </lineage>
</organism>
<proteinExistence type="inferred from homology"/>
<reference key="1">
    <citation type="submission" date="2007-04" db="EMBL/GenBank/DDBJ databases">
        <title>Complete sequence of Shewanella putrefaciens CN-32.</title>
        <authorList>
            <consortium name="US DOE Joint Genome Institute"/>
            <person name="Copeland A."/>
            <person name="Lucas S."/>
            <person name="Lapidus A."/>
            <person name="Barry K."/>
            <person name="Detter J.C."/>
            <person name="Glavina del Rio T."/>
            <person name="Hammon N."/>
            <person name="Israni S."/>
            <person name="Dalin E."/>
            <person name="Tice H."/>
            <person name="Pitluck S."/>
            <person name="Chain P."/>
            <person name="Malfatti S."/>
            <person name="Shin M."/>
            <person name="Vergez L."/>
            <person name="Schmutz J."/>
            <person name="Larimer F."/>
            <person name="Land M."/>
            <person name="Hauser L."/>
            <person name="Kyrpides N."/>
            <person name="Mikhailova N."/>
            <person name="Romine M.F."/>
            <person name="Fredrickson J."/>
            <person name="Tiedje J."/>
            <person name="Richardson P."/>
        </authorList>
    </citation>
    <scope>NUCLEOTIDE SEQUENCE [LARGE SCALE GENOMIC DNA]</scope>
    <source>
        <strain>CN-32 / ATCC BAA-453</strain>
    </source>
</reference>